<accession>C0Q0L0</accession>
<evidence type="ECO:0000255" key="1">
    <source>
        <dbReference type="HAMAP-Rule" id="MF_00624"/>
    </source>
</evidence>
<proteinExistence type="inferred from homology"/>
<gene>
    <name evidence="1" type="primary">glgC</name>
    <name type="ordered locus">SPC_3605</name>
</gene>
<name>GLGC_SALPC</name>
<comment type="function">
    <text evidence="1">Involved in the biosynthesis of ADP-glucose, a building block required for the elongation reactions to produce glycogen. Catalyzes the reaction between ATP and alpha-D-glucose 1-phosphate (G1P) to produce pyrophosphate and ADP-Glc.</text>
</comment>
<comment type="catalytic activity">
    <reaction evidence="1">
        <text>alpha-D-glucose 1-phosphate + ATP + H(+) = ADP-alpha-D-glucose + diphosphate</text>
        <dbReference type="Rhea" id="RHEA:12120"/>
        <dbReference type="ChEBI" id="CHEBI:15378"/>
        <dbReference type="ChEBI" id="CHEBI:30616"/>
        <dbReference type="ChEBI" id="CHEBI:33019"/>
        <dbReference type="ChEBI" id="CHEBI:57498"/>
        <dbReference type="ChEBI" id="CHEBI:58601"/>
        <dbReference type="EC" id="2.7.7.27"/>
    </reaction>
</comment>
<comment type="activity regulation">
    <text evidence="1">Allosterically activated by fructose-1,6-bisphosphate (F16BP) and inhibited by AMP.</text>
</comment>
<comment type="pathway">
    <text evidence="1">Glycan biosynthesis; glycogen biosynthesis.</text>
</comment>
<comment type="subunit">
    <text evidence="1">Homotetramer.</text>
</comment>
<comment type="similarity">
    <text evidence="1">Belongs to the bacterial/plant glucose-1-phosphate adenylyltransferase family.</text>
</comment>
<reference key="1">
    <citation type="journal article" date="2009" name="PLoS ONE">
        <title>Salmonella paratyphi C: genetic divergence from Salmonella choleraesuis and pathogenic convergence with Salmonella typhi.</title>
        <authorList>
            <person name="Liu W.-Q."/>
            <person name="Feng Y."/>
            <person name="Wang Y."/>
            <person name="Zou Q.-H."/>
            <person name="Chen F."/>
            <person name="Guo J.-T."/>
            <person name="Peng Y.-H."/>
            <person name="Jin Y."/>
            <person name="Li Y.-G."/>
            <person name="Hu S.-N."/>
            <person name="Johnston R.N."/>
            <person name="Liu G.-R."/>
            <person name="Liu S.-L."/>
        </authorList>
    </citation>
    <scope>NUCLEOTIDE SEQUENCE [LARGE SCALE GENOMIC DNA]</scope>
    <source>
        <strain>RKS4594</strain>
    </source>
</reference>
<sequence>MVSLEKNDRVMLARQLPLKSVALILAGGRGTRLKDLTNKRAKPAVHFGGKFRIIDFALSNCLNSGIRRIGVITQYQSHTLVQHIQRGWSLFSEEMNEFVDLLPAQQRMKGENWYRGTADAVTQNLDIIRRYKAEYVVILAGDHIYKQDYSRMLIDHVEKGARCTVACMPVPIKEATAFGVMAVDESDKIIDFVEKPANPPAMPGDASKALASMGIYVFDADYLYELLAADDKDDASSHDFGKDIIPKITREGMAYAHPFPLSCVQSDPQAEPYWRDVGTLEAYWKANLDLASVTPELDMYDQNWPIRTHMESLPPAKFVQDRSGSHGMTLNSLVSGGCIISGSVVVQSVLFPRVRINSFCNIDSAVLLPEVWVGRSCRLRRCVIDRACIIPEGMVIGENAEEDARRFYRSEEGIVLVTREMLRKLQVKQER</sequence>
<dbReference type="EC" id="2.7.7.27" evidence="1"/>
<dbReference type="EMBL" id="CP000857">
    <property type="protein sequence ID" value="ACN47687.1"/>
    <property type="molecule type" value="Genomic_DNA"/>
</dbReference>
<dbReference type="RefSeq" id="WP_000253994.1">
    <property type="nucleotide sequence ID" value="NC_012125.1"/>
</dbReference>
<dbReference type="SMR" id="C0Q0L0"/>
<dbReference type="KEGG" id="sei:SPC_3605"/>
<dbReference type="HOGENOM" id="CLU_029499_14_1_6"/>
<dbReference type="UniPathway" id="UPA00164"/>
<dbReference type="Proteomes" id="UP000001599">
    <property type="component" value="Chromosome"/>
</dbReference>
<dbReference type="GO" id="GO:0005524">
    <property type="term" value="F:ATP binding"/>
    <property type="evidence" value="ECO:0007669"/>
    <property type="project" value="UniProtKB-KW"/>
</dbReference>
<dbReference type="GO" id="GO:0008878">
    <property type="term" value="F:glucose-1-phosphate adenylyltransferase activity"/>
    <property type="evidence" value="ECO:0007669"/>
    <property type="project" value="UniProtKB-UniRule"/>
</dbReference>
<dbReference type="GO" id="GO:0005978">
    <property type="term" value="P:glycogen biosynthetic process"/>
    <property type="evidence" value="ECO:0007669"/>
    <property type="project" value="UniProtKB-UniRule"/>
</dbReference>
<dbReference type="CDD" id="cd02508">
    <property type="entry name" value="ADP_Glucose_PP"/>
    <property type="match status" value="1"/>
</dbReference>
<dbReference type="CDD" id="cd04651">
    <property type="entry name" value="LbH_G1P_AT_C"/>
    <property type="match status" value="1"/>
</dbReference>
<dbReference type="FunFam" id="2.160.10.10:FF:000006">
    <property type="entry name" value="Glucose-1-phosphate adenylyltransferase"/>
    <property type="match status" value="1"/>
</dbReference>
<dbReference type="FunFam" id="3.90.550.10:FF:000014">
    <property type="entry name" value="Glucose-1-phosphate adenylyltransferase"/>
    <property type="match status" value="1"/>
</dbReference>
<dbReference type="Gene3D" id="2.160.10.10">
    <property type="entry name" value="Hexapeptide repeat proteins"/>
    <property type="match status" value="1"/>
</dbReference>
<dbReference type="Gene3D" id="3.90.550.10">
    <property type="entry name" value="Spore Coat Polysaccharide Biosynthesis Protein SpsA, Chain A"/>
    <property type="match status" value="1"/>
</dbReference>
<dbReference type="HAMAP" id="MF_00624">
    <property type="entry name" value="GlgC"/>
    <property type="match status" value="1"/>
</dbReference>
<dbReference type="InterPro" id="IPR011831">
    <property type="entry name" value="ADP-Glc_PPase"/>
</dbReference>
<dbReference type="InterPro" id="IPR005836">
    <property type="entry name" value="ADP_Glu_pyroP_CS"/>
</dbReference>
<dbReference type="InterPro" id="IPR023049">
    <property type="entry name" value="GlgC_bac"/>
</dbReference>
<dbReference type="InterPro" id="IPR056818">
    <property type="entry name" value="GlmU/GlgC-like_hexapep"/>
</dbReference>
<dbReference type="InterPro" id="IPR005835">
    <property type="entry name" value="NTP_transferase_dom"/>
</dbReference>
<dbReference type="InterPro" id="IPR029044">
    <property type="entry name" value="Nucleotide-diphossugar_trans"/>
</dbReference>
<dbReference type="InterPro" id="IPR011004">
    <property type="entry name" value="Trimer_LpxA-like_sf"/>
</dbReference>
<dbReference type="NCBIfam" id="TIGR02091">
    <property type="entry name" value="glgC"/>
    <property type="match status" value="1"/>
</dbReference>
<dbReference type="NCBIfam" id="NF001947">
    <property type="entry name" value="PRK00725.1"/>
    <property type="match status" value="1"/>
</dbReference>
<dbReference type="NCBIfam" id="NF002023">
    <property type="entry name" value="PRK00844.1"/>
    <property type="match status" value="1"/>
</dbReference>
<dbReference type="PANTHER" id="PTHR43523:SF2">
    <property type="entry name" value="GLUCOSE-1-PHOSPHATE ADENYLYLTRANSFERASE"/>
    <property type="match status" value="1"/>
</dbReference>
<dbReference type="PANTHER" id="PTHR43523">
    <property type="entry name" value="GLUCOSE-1-PHOSPHATE ADENYLYLTRANSFERASE-RELATED"/>
    <property type="match status" value="1"/>
</dbReference>
<dbReference type="Pfam" id="PF24894">
    <property type="entry name" value="Hexapep_GlmU"/>
    <property type="match status" value="1"/>
</dbReference>
<dbReference type="Pfam" id="PF00483">
    <property type="entry name" value="NTP_transferase"/>
    <property type="match status" value="1"/>
</dbReference>
<dbReference type="SUPFAM" id="SSF53448">
    <property type="entry name" value="Nucleotide-diphospho-sugar transferases"/>
    <property type="match status" value="1"/>
</dbReference>
<dbReference type="SUPFAM" id="SSF51161">
    <property type="entry name" value="Trimeric LpxA-like enzymes"/>
    <property type="match status" value="1"/>
</dbReference>
<dbReference type="PROSITE" id="PS00808">
    <property type="entry name" value="ADP_GLC_PYROPHOSPH_1"/>
    <property type="match status" value="1"/>
</dbReference>
<dbReference type="PROSITE" id="PS00809">
    <property type="entry name" value="ADP_GLC_PYROPHOSPH_2"/>
    <property type="match status" value="1"/>
</dbReference>
<dbReference type="PROSITE" id="PS00810">
    <property type="entry name" value="ADP_GLC_PYROPHOSPH_3"/>
    <property type="match status" value="1"/>
</dbReference>
<feature type="chain" id="PRO_1000147233" description="Glucose-1-phosphate adenylyltransferase">
    <location>
        <begin position="1"/>
        <end position="431"/>
    </location>
</feature>
<feature type="binding site" evidence="1">
    <location>
        <position position="39"/>
    </location>
    <ligand>
        <name>beta-D-fructose 1,6-bisphosphate</name>
        <dbReference type="ChEBI" id="CHEBI:32966"/>
    </ligand>
</feature>
<feature type="binding site" evidence="1">
    <location>
        <position position="40"/>
    </location>
    <ligand>
        <name>AMP</name>
        <dbReference type="ChEBI" id="CHEBI:456215"/>
    </ligand>
</feature>
<feature type="binding site" evidence="1">
    <location>
        <position position="46"/>
    </location>
    <ligand>
        <name>AMP</name>
        <dbReference type="ChEBI" id="CHEBI:456215"/>
    </ligand>
</feature>
<feature type="binding site" evidence="1">
    <location>
        <position position="52"/>
    </location>
    <ligand>
        <name>AMP</name>
        <dbReference type="ChEBI" id="CHEBI:456215"/>
    </ligand>
</feature>
<feature type="binding site" evidence="1">
    <location>
        <position position="114"/>
    </location>
    <ligand>
        <name>alpha-D-glucose 1-phosphate</name>
        <dbReference type="ChEBI" id="CHEBI:58601"/>
    </ligand>
</feature>
<feature type="binding site" evidence="1">
    <location>
        <position position="130"/>
    </location>
    <ligand>
        <name>AMP</name>
        <dbReference type="ChEBI" id="CHEBI:456215"/>
    </ligand>
</feature>
<feature type="binding site" evidence="1">
    <location>
        <position position="179"/>
    </location>
    <ligand>
        <name>alpha-D-glucose 1-phosphate</name>
        <dbReference type="ChEBI" id="CHEBI:58601"/>
    </ligand>
</feature>
<feature type="binding site" evidence="1">
    <location>
        <begin position="194"/>
        <end position="195"/>
    </location>
    <ligand>
        <name>alpha-D-glucose 1-phosphate</name>
        <dbReference type="ChEBI" id="CHEBI:58601"/>
    </ligand>
</feature>
<feature type="binding site" evidence="1">
    <location>
        <position position="212"/>
    </location>
    <ligand>
        <name>alpha-D-glucose 1-phosphate</name>
        <dbReference type="ChEBI" id="CHEBI:58601"/>
    </ligand>
</feature>
<feature type="binding site" evidence="1">
    <location>
        <position position="370"/>
    </location>
    <ligand>
        <name>AMP</name>
        <dbReference type="ChEBI" id="CHEBI:456215"/>
    </ligand>
</feature>
<feature type="binding site" evidence="1">
    <location>
        <position position="386"/>
    </location>
    <ligand>
        <name>AMP</name>
        <dbReference type="ChEBI" id="CHEBI:456215"/>
    </ligand>
</feature>
<feature type="binding site" evidence="1">
    <location>
        <begin position="419"/>
        <end position="423"/>
    </location>
    <ligand>
        <name>beta-D-fructose 1,6-bisphosphate</name>
        <dbReference type="ChEBI" id="CHEBI:32966"/>
    </ligand>
</feature>
<feature type="binding site" evidence="1">
    <location>
        <begin position="429"/>
        <end position="431"/>
    </location>
    <ligand>
        <name>beta-D-fructose 1,6-bisphosphate</name>
        <dbReference type="ChEBI" id="CHEBI:32966"/>
    </ligand>
</feature>
<feature type="site" description="Could play a key role in the communication between the regulatory and the substrate sites" evidence="1">
    <location>
        <position position="74"/>
    </location>
</feature>
<feature type="site" description="Could play a key role in the communication between the regulatory and the substrate sites" evidence="1">
    <location>
        <position position="113"/>
    </location>
</feature>
<organism>
    <name type="scientific">Salmonella paratyphi C (strain RKS4594)</name>
    <dbReference type="NCBI Taxonomy" id="476213"/>
    <lineage>
        <taxon>Bacteria</taxon>
        <taxon>Pseudomonadati</taxon>
        <taxon>Pseudomonadota</taxon>
        <taxon>Gammaproteobacteria</taxon>
        <taxon>Enterobacterales</taxon>
        <taxon>Enterobacteriaceae</taxon>
        <taxon>Salmonella</taxon>
    </lineage>
</organism>
<protein>
    <recommendedName>
        <fullName evidence="1">Glucose-1-phosphate adenylyltransferase</fullName>
        <ecNumber evidence="1">2.7.7.27</ecNumber>
    </recommendedName>
    <alternativeName>
        <fullName evidence="1">ADP-glucose pyrophosphorylase</fullName>
        <shortName evidence="1">ADPGlc PPase</shortName>
    </alternativeName>
    <alternativeName>
        <fullName evidence="1">ADP-glucose synthase</fullName>
    </alternativeName>
</protein>
<keyword id="KW-0021">Allosteric enzyme</keyword>
<keyword id="KW-0067">ATP-binding</keyword>
<keyword id="KW-0119">Carbohydrate metabolism</keyword>
<keyword id="KW-0320">Glycogen biosynthesis</keyword>
<keyword id="KW-0321">Glycogen metabolism</keyword>
<keyword id="KW-0547">Nucleotide-binding</keyword>
<keyword id="KW-0548">Nucleotidyltransferase</keyword>
<keyword id="KW-0808">Transferase</keyword>